<comment type="function">
    <text evidence="1">Involved in the synthesis of autoinducer 2 (AI-2) which is secreted by bacteria and is used to communicate both the cell density and the metabolic potential of the environment. The regulation of gene expression in response to changes in cell density is called quorum sensing. Catalyzes the transformation of S-ribosylhomocysteine (RHC) to homocysteine (HC) and 4,5-dihydroxy-2,3-pentadione (DPD).</text>
</comment>
<comment type="catalytic activity">
    <reaction evidence="1">
        <text>S-(5-deoxy-D-ribos-5-yl)-L-homocysteine = (S)-4,5-dihydroxypentane-2,3-dione + L-homocysteine</text>
        <dbReference type="Rhea" id="RHEA:17753"/>
        <dbReference type="ChEBI" id="CHEBI:29484"/>
        <dbReference type="ChEBI" id="CHEBI:58195"/>
        <dbReference type="ChEBI" id="CHEBI:58199"/>
        <dbReference type="EC" id="4.4.1.21"/>
    </reaction>
</comment>
<comment type="cofactor">
    <cofactor evidence="1">
        <name>Fe cation</name>
        <dbReference type="ChEBI" id="CHEBI:24875"/>
    </cofactor>
    <text evidence="1">Binds 1 Fe cation per subunit.</text>
</comment>
<comment type="subunit">
    <text evidence="1">Homodimer.</text>
</comment>
<comment type="similarity">
    <text evidence="1">Belongs to the LuxS family.</text>
</comment>
<protein>
    <recommendedName>
        <fullName evidence="1">S-ribosylhomocysteine lyase</fullName>
        <ecNumber evidence="1">4.4.1.21</ecNumber>
    </recommendedName>
    <alternativeName>
        <fullName evidence="1">AI-2 synthesis protein</fullName>
    </alternativeName>
    <alternativeName>
        <fullName evidence="1">Autoinducer-2 production protein LuxS</fullName>
    </alternativeName>
</protein>
<gene>
    <name evidence="1" type="primary">luxS</name>
    <name type="ordered locus">ECUMN_3012</name>
</gene>
<accession>B7N6S2</accession>
<feature type="chain" id="PRO_1000117220" description="S-ribosylhomocysteine lyase">
    <location>
        <begin position="1"/>
        <end position="171"/>
    </location>
</feature>
<feature type="binding site" evidence="1">
    <location>
        <position position="54"/>
    </location>
    <ligand>
        <name>Fe cation</name>
        <dbReference type="ChEBI" id="CHEBI:24875"/>
    </ligand>
</feature>
<feature type="binding site" evidence="1">
    <location>
        <position position="58"/>
    </location>
    <ligand>
        <name>Fe cation</name>
        <dbReference type="ChEBI" id="CHEBI:24875"/>
    </ligand>
</feature>
<feature type="binding site" evidence="1">
    <location>
        <position position="128"/>
    </location>
    <ligand>
        <name>Fe cation</name>
        <dbReference type="ChEBI" id="CHEBI:24875"/>
    </ligand>
</feature>
<proteinExistence type="inferred from homology"/>
<sequence length="171" mass="19416">MPLLDSFTVDHTRMEAPAVRVAKTMNTPHGDAITVFDLRFCVPNKEVMPERGIHTLEHLFAGFMRNHLNGNGVEIIDISPMGCRTGFYMSLIGTPDEQRVADAWKAAMEDVLKVQDQNQIPELNVYQCGTYQMHSLQEAQDIARSILERDVRINSNEELALPKEKLQELHI</sequence>
<name>LUXS_ECOLU</name>
<keyword id="KW-0071">Autoinducer synthesis</keyword>
<keyword id="KW-0408">Iron</keyword>
<keyword id="KW-0456">Lyase</keyword>
<keyword id="KW-0479">Metal-binding</keyword>
<keyword id="KW-0673">Quorum sensing</keyword>
<reference key="1">
    <citation type="journal article" date="2009" name="PLoS Genet.">
        <title>Organised genome dynamics in the Escherichia coli species results in highly diverse adaptive paths.</title>
        <authorList>
            <person name="Touchon M."/>
            <person name="Hoede C."/>
            <person name="Tenaillon O."/>
            <person name="Barbe V."/>
            <person name="Baeriswyl S."/>
            <person name="Bidet P."/>
            <person name="Bingen E."/>
            <person name="Bonacorsi S."/>
            <person name="Bouchier C."/>
            <person name="Bouvet O."/>
            <person name="Calteau A."/>
            <person name="Chiapello H."/>
            <person name="Clermont O."/>
            <person name="Cruveiller S."/>
            <person name="Danchin A."/>
            <person name="Diard M."/>
            <person name="Dossat C."/>
            <person name="Karoui M.E."/>
            <person name="Frapy E."/>
            <person name="Garry L."/>
            <person name="Ghigo J.M."/>
            <person name="Gilles A.M."/>
            <person name="Johnson J."/>
            <person name="Le Bouguenec C."/>
            <person name="Lescat M."/>
            <person name="Mangenot S."/>
            <person name="Martinez-Jehanne V."/>
            <person name="Matic I."/>
            <person name="Nassif X."/>
            <person name="Oztas S."/>
            <person name="Petit M.A."/>
            <person name="Pichon C."/>
            <person name="Rouy Z."/>
            <person name="Ruf C.S."/>
            <person name="Schneider D."/>
            <person name="Tourret J."/>
            <person name="Vacherie B."/>
            <person name="Vallenet D."/>
            <person name="Medigue C."/>
            <person name="Rocha E.P.C."/>
            <person name="Denamur E."/>
        </authorList>
    </citation>
    <scope>NUCLEOTIDE SEQUENCE [LARGE SCALE GENOMIC DNA]</scope>
    <source>
        <strain>UMN026 / ExPEC</strain>
    </source>
</reference>
<organism>
    <name type="scientific">Escherichia coli O17:K52:H18 (strain UMN026 / ExPEC)</name>
    <dbReference type="NCBI Taxonomy" id="585056"/>
    <lineage>
        <taxon>Bacteria</taxon>
        <taxon>Pseudomonadati</taxon>
        <taxon>Pseudomonadota</taxon>
        <taxon>Gammaproteobacteria</taxon>
        <taxon>Enterobacterales</taxon>
        <taxon>Enterobacteriaceae</taxon>
        <taxon>Escherichia</taxon>
    </lineage>
</organism>
<dbReference type="EC" id="4.4.1.21" evidence="1"/>
<dbReference type="EMBL" id="CU928163">
    <property type="protein sequence ID" value="CAR14183.1"/>
    <property type="molecule type" value="Genomic_DNA"/>
</dbReference>
<dbReference type="RefSeq" id="WP_001130211.1">
    <property type="nucleotide sequence ID" value="NC_011751.1"/>
</dbReference>
<dbReference type="RefSeq" id="YP_002413705.1">
    <property type="nucleotide sequence ID" value="NC_011751.1"/>
</dbReference>
<dbReference type="SMR" id="B7N6S2"/>
<dbReference type="STRING" id="585056.ECUMN_3012"/>
<dbReference type="GeneID" id="93779324"/>
<dbReference type="KEGG" id="eum:ECUMN_3012"/>
<dbReference type="PATRIC" id="fig|585056.7.peg.3189"/>
<dbReference type="HOGENOM" id="CLU_107531_2_0_6"/>
<dbReference type="Proteomes" id="UP000007097">
    <property type="component" value="Chromosome"/>
</dbReference>
<dbReference type="GO" id="GO:0005506">
    <property type="term" value="F:iron ion binding"/>
    <property type="evidence" value="ECO:0007669"/>
    <property type="project" value="InterPro"/>
</dbReference>
<dbReference type="GO" id="GO:0043768">
    <property type="term" value="F:S-ribosylhomocysteine lyase activity"/>
    <property type="evidence" value="ECO:0007669"/>
    <property type="project" value="UniProtKB-UniRule"/>
</dbReference>
<dbReference type="GO" id="GO:0009372">
    <property type="term" value="P:quorum sensing"/>
    <property type="evidence" value="ECO:0007669"/>
    <property type="project" value="UniProtKB-UniRule"/>
</dbReference>
<dbReference type="FunFam" id="3.30.1360.80:FF:000001">
    <property type="entry name" value="S-ribosylhomocysteine lyase"/>
    <property type="match status" value="1"/>
</dbReference>
<dbReference type="Gene3D" id="3.30.1360.80">
    <property type="entry name" value="S-ribosylhomocysteinase (LuxS)"/>
    <property type="match status" value="1"/>
</dbReference>
<dbReference type="HAMAP" id="MF_00091">
    <property type="entry name" value="LuxS"/>
    <property type="match status" value="1"/>
</dbReference>
<dbReference type="InterPro" id="IPR037005">
    <property type="entry name" value="LuxS_sf"/>
</dbReference>
<dbReference type="InterPro" id="IPR011249">
    <property type="entry name" value="Metalloenz_LuxS/M16"/>
</dbReference>
<dbReference type="InterPro" id="IPR003815">
    <property type="entry name" value="S-ribosylhomocysteinase"/>
</dbReference>
<dbReference type="NCBIfam" id="NF002602">
    <property type="entry name" value="PRK02260.1-2"/>
    <property type="match status" value="1"/>
</dbReference>
<dbReference type="PANTHER" id="PTHR35799">
    <property type="entry name" value="S-RIBOSYLHOMOCYSTEINE LYASE"/>
    <property type="match status" value="1"/>
</dbReference>
<dbReference type="PANTHER" id="PTHR35799:SF1">
    <property type="entry name" value="S-RIBOSYLHOMOCYSTEINE LYASE"/>
    <property type="match status" value="1"/>
</dbReference>
<dbReference type="Pfam" id="PF02664">
    <property type="entry name" value="LuxS"/>
    <property type="match status" value="1"/>
</dbReference>
<dbReference type="PIRSF" id="PIRSF006160">
    <property type="entry name" value="AI2"/>
    <property type="match status" value="1"/>
</dbReference>
<dbReference type="PRINTS" id="PR01487">
    <property type="entry name" value="LUXSPROTEIN"/>
</dbReference>
<dbReference type="SUPFAM" id="SSF63411">
    <property type="entry name" value="LuxS/MPP-like metallohydrolase"/>
    <property type="match status" value="1"/>
</dbReference>
<evidence type="ECO:0000255" key="1">
    <source>
        <dbReference type="HAMAP-Rule" id="MF_00091"/>
    </source>
</evidence>